<keyword id="KW-0687">Ribonucleoprotein</keyword>
<keyword id="KW-0689">Ribosomal protein</keyword>
<organism>
    <name type="scientific">Helicobacter pylori (strain HPAG1)</name>
    <dbReference type="NCBI Taxonomy" id="357544"/>
    <lineage>
        <taxon>Bacteria</taxon>
        <taxon>Pseudomonadati</taxon>
        <taxon>Campylobacterota</taxon>
        <taxon>Epsilonproteobacteria</taxon>
        <taxon>Campylobacterales</taxon>
        <taxon>Helicobacteraceae</taxon>
        <taxon>Helicobacter</taxon>
    </lineage>
</organism>
<accession>Q1CUW1</accession>
<protein>
    <recommendedName>
        <fullName evidence="1">Large ribosomal subunit protein bL32</fullName>
    </recommendedName>
    <alternativeName>
        <fullName evidence="2">50S ribosomal protein L32</fullName>
    </alternativeName>
</protein>
<proteinExistence type="inferred from homology"/>
<evidence type="ECO:0000255" key="1">
    <source>
        <dbReference type="HAMAP-Rule" id="MF_00340"/>
    </source>
</evidence>
<evidence type="ECO:0000305" key="2"/>
<gene>
    <name evidence="1" type="primary">rpmF</name>
    <name type="ordered locus">HPAG1_0194</name>
</gene>
<name>RL32_HELPH</name>
<comment type="similarity">
    <text evidence="1">Belongs to the bacterial ribosomal protein bL32 family.</text>
</comment>
<feature type="chain" id="PRO_0000296478" description="Large ribosomal subunit protein bL32">
    <location>
        <begin position="1"/>
        <end position="48"/>
    </location>
</feature>
<reference key="1">
    <citation type="journal article" date="2006" name="Proc. Natl. Acad. Sci. U.S.A.">
        <title>The complete genome sequence of a chronic atrophic gastritis Helicobacter pylori strain: evolution during disease progression.</title>
        <authorList>
            <person name="Oh J.D."/>
            <person name="Kling-Baeckhed H."/>
            <person name="Giannakis M."/>
            <person name="Xu J."/>
            <person name="Fulton R.S."/>
            <person name="Fulton L.A."/>
            <person name="Cordum H.S."/>
            <person name="Wang C."/>
            <person name="Elliott G."/>
            <person name="Edwards J."/>
            <person name="Mardis E.R."/>
            <person name="Engstrand L.G."/>
            <person name="Gordon J.I."/>
        </authorList>
    </citation>
    <scope>NUCLEOTIDE SEQUENCE [LARGE SCALE GENOMIC DNA]</scope>
    <source>
        <strain>HPAG1</strain>
    </source>
</reference>
<sequence length="48" mass="5647">MAVPDRRVSKTRAAKRRTHYSVKLAKPVKAKDGTWKLPHHINKFTKEY</sequence>
<dbReference type="EMBL" id="CP000241">
    <property type="protein sequence ID" value="ABF84261.1"/>
    <property type="molecule type" value="Genomic_DNA"/>
</dbReference>
<dbReference type="RefSeq" id="WP_000290431.1">
    <property type="nucleotide sequence ID" value="NC_008086.1"/>
</dbReference>
<dbReference type="SMR" id="Q1CUW1"/>
<dbReference type="KEGG" id="hpa:HPAG1_0194"/>
<dbReference type="HOGENOM" id="CLU_129084_1_2_7"/>
<dbReference type="GO" id="GO:0015934">
    <property type="term" value="C:large ribosomal subunit"/>
    <property type="evidence" value="ECO:0007669"/>
    <property type="project" value="InterPro"/>
</dbReference>
<dbReference type="GO" id="GO:0003735">
    <property type="term" value="F:structural constituent of ribosome"/>
    <property type="evidence" value="ECO:0007669"/>
    <property type="project" value="InterPro"/>
</dbReference>
<dbReference type="GO" id="GO:0006412">
    <property type="term" value="P:translation"/>
    <property type="evidence" value="ECO:0007669"/>
    <property type="project" value="UniProtKB-UniRule"/>
</dbReference>
<dbReference type="HAMAP" id="MF_00340">
    <property type="entry name" value="Ribosomal_bL32"/>
    <property type="match status" value="1"/>
</dbReference>
<dbReference type="InterPro" id="IPR002677">
    <property type="entry name" value="Ribosomal_bL32"/>
</dbReference>
<dbReference type="InterPro" id="IPR011332">
    <property type="entry name" value="Ribosomal_zn-bd"/>
</dbReference>
<dbReference type="NCBIfam" id="TIGR01031">
    <property type="entry name" value="rpmF_bact"/>
    <property type="match status" value="1"/>
</dbReference>
<dbReference type="Pfam" id="PF01783">
    <property type="entry name" value="Ribosomal_L32p"/>
    <property type="match status" value="1"/>
</dbReference>
<dbReference type="SUPFAM" id="SSF57829">
    <property type="entry name" value="Zn-binding ribosomal proteins"/>
    <property type="match status" value="1"/>
</dbReference>